<keyword id="KW-0067">ATP-binding</keyword>
<keyword id="KW-0507">mRNA processing</keyword>
<keyword id="KW-0547">Nucleotide-binding</keyword>
<keyword id="KW-0539">Nucleus</keyword>
<accession>B4P4H2</accession>
<reference key="1">
    <citation type="journal article" date="2007" name="Nature">
        <title>Evolution of genes and genomes on the Drosophila phylogeny.</title>
        <authorList>
            <consortium name="Drosophila 12 genomes consortium"/>
        </authorList>
    </citation>
    <scope>NUCLEOTIDE SEQUENCE [LARGE SCALE GENOMIC DNA]</scope>
    <source>
        <strain>Tai18E2 / Tucson 14021-0261.01</strain>
    </source>
</reference>
<feature type="chain" id="PRO_0000375188" description="Protein CLP1 homolog">
    <location>
        <begin position="1"/>
        <end position="423"/>
    </location>
</feature>
<feature type="binding site" evidence="1">
    <location>
        <position position="16"/>
    </location>
    <ligand>
        <name>ATP</name>
        <dbReference type="ChEBI" id="CHEBI:30616"/>
    </ligand>
</feature>
<feature type="binding site" evidence="1">
    <location>
        <position position="57"/>
    </location>
    <ligand>
        <name>ATP</name>
        <dbReference type="ChEBI" id="CHEBI:30616"/>
    </ligand>
</feature>
<feature type="binding site" evidence="1">
    <location>
        <begin position="119"/>
        <end position="124"/>
    </location>
    <ligand>
        <name>ATP</name>
        <dbReference type="ChEBI" id="CHEBI:30616"/>
    </ligand>
</feature>
<comment type="function">
    <text evidence="1">Required for endonucleolytic cleavage during polyadenylation-dependent pre-mRNA 3'-end formation.</text>
</comment>
<comment type="subcellular location">
    <subcellularLocation>
        <location evidence="1">Nucleus</location>
    </subcellularLocation>
</comment>
<comment type="similarity">
    <text evidence="1">Belongs to the Clp1 family. Clp1 subfamily.</text>
</comment>
<dbReference type="EMBL" id="CM000158">
    <property type="protein sequence ID" value="EDW90611.1"/>
    <property type="molecule type" value="Genomic_DNA"/>
</dbReference>
<dbReference type="SMR" id="B4P4H2"/>
<dbReference type="EnsemblMetazoa" id="FBtr0259877">
    <property type="protein sequence ID" value="FBpp0258369"/>
    <property type="gene ID" value="FBgn0231038"/>
</dbReference>
<dbReference type="EnsemblMetazoa" id="XM_002090863.4">
    <property type="protein sequence ID" value="XP_002090899.1"/>
    <property type="gene ID" value="LOC6529944"/>
</dbReference>
<dbReference type="GeneID" id="6529944"/>
<dbReference type="KEGG" id="dya:Dyak_GE13359"/>
<dbReference type="CTD" id="36494"/>
<dbReference type="eggNOG" id="KOG2749">
    <property type="taxonomic scope" value="Eukaryota"/>
</dbReference>
<dbReference type="HOGENOM" id="CLU_018195_1_0_1"/>
<dbReference type="OMA" id="VQYVNCH"/>
<dbReference type="OrthoDB" id="258143at2759"/>
<dbReference type="PhylomeDB" id="B4P4H2"/>
<dbReference type="Proteomes" id="UP000002282">
    <property type="component" value="Chromosome 2R"/>
</dbReference>
<dbReference type="GO" id="GO:0005849">
    <property type="term" value="C:mRNA cleavage factor complex"/>
    <property type="evidence" value="ECO:0007669"/>
    <property type="project" value="InterPro"/>
</dbReference>
<dbReference type="GO" id="GO:0000214">
    <property type="term" value="C:tRNA-intron endonuclease complex"/>
    <property type="evidence" value="ECO:0000250"/>
    <property type="project" value="UniProtKB"/>
</dbReference>
<dbReference type="GO" id="GO:0005524">
    <property type="term" value="F:ATP binding"/>
    <property type="evidence" value="ECO:0007669"/>
    <property type="project" value="UniProtKB-UniRule"/>
</dbReference>
<dbReference type="GO" id="GO:0051731">
    <property type="term" value="F:polynucleotide 5'-hydroxyl-kinase activity"/>
    <property type="evidence" value="ECO:0007669"/>
    <property type="project" value="InterPro"/>
</dbReference>
<dbReference type="GO" id="GO:0031124">
    <property type="term" value="P:mRNA 3'-end processing"/>
    <property type="evidence" value="ECO:0007669"/>
    <property type="project" value="UniProtKB-UniRule"/>
</dbReference>
<dbReference type="GO" id="GO:0006388">
    <property type="term" value="P:tRNA splicing, via endonucleolytic cleavage and ligation"/>
    <property type="evidence" value="ECO:0000250"/>
    <property type="project" value="UniProtKB"/>
</dbReference>
<dbReference type="CDD" id="cd01983">
    <property type="entry name" value="SIMIBI"/>
    <property type="match status" value="1"/>
</dbReference>
<dbReference type="FunFam" id="2.40.30.330:FF:000001">
    <property type="entry name" value="Protein CLP1 homolog"/>
    <property type="match status" value="1"/>
</dbReference>
<dbReference type="FunFam" id="3.40.50.300:FF:000454">
    <property type="entry name" value="Protein CLP1 homolog"/>
    <property type="match status" value="1"/>
</dbReference>
<dbReference type="FunFam" id="2.60.120.1030:FF:000001">
    <property type="entry name" value="Protein CLP1 homolog 5"/>
    <property type="match status" value="1"/>
</dbReference>
<dbReference type="Gene3D" id="2.60.120.1030">
    <property type="entry name" value="Clp1, DNA binding domain"/>
    <property type="match status" value="1"/>
</dbReference>
<dbReference type="Gene3D" id="3.40.50.300">
    <property type="entry name" value="P-loop containing nucleotide triphosphate hydrolases"/>
    <property type="match status" value="1"/>
</dbReference>
<dbReference type="Gene3D" id="2.40.30.330">
    <property type="entry name" value="Pre-mRNA cleavage complex subunit Clp1, C-terminal domain"/>
    <property type="match status" value="1"/>
</dbReference>
<dbReference type="HAMAP" id="MF_03035">
    <property type="entry name" value="Clp1"/>
    <property type="match status" value="1"/>
</dbReference>
<dbReference type="InterPro" id="IPR028606">
    <property type="entry name" value="Clp1"/>
</dbReference>
<dbReference type="InterPro" id="IPR045116">
    <property type="entry name" value="Clp1/Grc3"/>
</dbReference>
<dbReference type="InterPro" id="IPR010655">
    <property type="entry name" value="Clp1_C"/>
</dbReference>
<dbReference type="InterPro" id="IPR038238">
    <property type="entry name" value="Clp1_C_sf"/>
</dbReference>
<dbReference type="InterPro" id="IPR032324">
    <property type="entry name" value="Clp1_N"/>
</dbReference>
<dbReference type="InterPro" id="IPR038239">
    <property type="entry name" value="Clp1_N_sf"/>
</dbReference>
<dbReference type="InterPro" id="IPR032319">
    <property type="entry name" value="CLP1_P"/>
</dbReference>
<dbReference type="InterPro" id="IPR027417">
    <property type="entry name" value="P-loop_NTPase"/>
</dbReference>
<dbReference type="PANTHER" id="PTHR12755">
    <property type="entry name" value="CLEAVAGE/POLYADENYLATION FACTOR IA SUBUNIT CLP1P"/>
    <property type="match status" value="1"/>
</dbReference>
<dbReference type="PANTHER" id="PTHR12755:SF6">
    <property type="entry name" value="POLYRIBONUCLEOTIDE 5'-HYDROXYL-KINASE CLP1"/>
    <property type="match status" value="1"/>
</dbReference>
<dbReference type="Pfam" id="PF06807">
    <property type="entry name" value="Clp1"/>
    <property type="match status" value="1"/>
</dbReference>
<dbReference type="Pfam" id="PF16573">
    <property type="entry name" value="CLP1_N"/>
    <property type="match status" value="1"/>
</dbReference>
<dbReference type="Pfam" id="PF16575">
    <property type="entry name" value="CLP1_P"/>
    <property type="match status" value="1"/>
</dbReference>
<dbReference type="SUPFAM" id="SSF52540">
    <property type="entry name" value="P-loop containing nucleoside triphosphate hydrolases"/>
    <property type="match status" value="1"/>
</dbReference>
<gene>
    <name type="primary">cbc</name>
    <name type="ORF">GE13359</name>
</gene>
<organism>
    <name type="scientific">Drosophila yakuba</name>
    <name type="common">Fruit fly</name>
    <dbReference type="NCBI Taxonomy" id="7245"/>
    <lineage>
        <taxon>Eukaryota</taxon>
        <taxon>Metazoa</taxon>
        <taxon>Ecdysozoa</taxon>
        <taxon>Arthropoda</taxon>
        <taxon>Hexapoda</taxon>
        <taxon>Insecta</taxon>
        <taxon>Pterygota</taxon>
        <taxon>Neoptera</taxon>
        <taxon>Endopterygota</taxon>
        <taxon>Diptera</taxon>
        <taxon>Brachycera</taxon>
        <taxon>Muscomorpha</taxon>
        <taxon>Ephydroidea</taxon>
        <taxon>Drosophilidae</taxon>
        <taxon>Drosophila</taxon>
        <taxon>Sophophora</taxon>
    </lineage>
</organism>
<proteinExistence type="inferred from homology"/>
<name>CLP1_DROYA</name>
<sequence>MSEDHGKDYTLEADSELRFEIEQKDAKVLVSLVSGFAELFGTELVKKKQYEFGMGAKVAIFTYQGCVLHVSGKMDVCYISKETPMVQYVNCHAALEQFRMEAEEKDRHGPVAMVVGPMDVGKSTLCRILLNYAVRVGRRPLYADLDVGQGSIAIAGSVATILIERPANVEEGFAKTAPLVYHFGHKSPSGNSILYNAVVSKMAEVTLHSLNSNKRTKSSGIIVNTCGWVKGSGYAHLLHAAKAYGACAIFVLDQERLYNELLRDVPKGVHVVLLPKSGGVVERSKELRHEARDQRIKEYFYGNARAPFYPFSFEVKFQDLRLYKIGAPPLPDSCMPIGMKAEDNKTKVVAVTPTPALIHHVLALSFAESVEDEVIGTNVAGFCCVTEVDMERQAVMLLSPQPRPLPPNALLLWSELQFMDNHT</sequence>
<evidence type="ECO:0000255" key="1">
    <source>
        <dbReference type="HAMAP-Rule" id="MF_03035"/>
    </source>
</evidence>
<protein>
    <recommendedName>
        <fullName evidence="1">Protein CLP1 homolog</fullName>
    </recommendedName>
</protein>